<name>GTR12_DANRE</name>
<comment type="function">
    <text evidence="5">Insulin-regulated facilitative glucose transporter.</text>
</comment>
<comment type="catalytic activity">
    <reaction evidence="9">
        <text>D-glucose(out) = D-glucose(in)</text>
        <dbReference type="Rhea" id="RHEA:60376"/>
        <dbReference type="ChEBI" id="CHEBI:4167"/>
    </reaction>
</comment>
<comment type="subcellular location">
    <subcellularLocation>
        <location evidence="2">Cell membrane</location>
        <topology evidence="4">Multi-pass membrane protein</topology>
    </subcellularLocation>
    <subcellularLocation>
        <location evidence="1">Endomembrane system</location>
        <topology evidence="4">Multi-pass membrane protein</topology>
    </subcellularLocation>
    <subcellularLocation>
        <location evidence="3">Cytoplasm</location>
        <location evidence="3">Perinuclear region</location>
    </subcellularLocation>
    <text evidence="3">Localizes primarily perinuclear region in the absence of insulin.</text>
</comment>
<comment type="tissue specificity">
    <text evidence="5">Expressed in the main insulin-sensitive tissues, such as cardiac muscle, skeletal muscle and adipose tissue.</text>
</comment>
<comment type="disruption phenotype">
    <text evidence="5">Morpholino knockdown of the protein impairs the development of the embryonic heart resulting in abnormal valve formation (PubMed:25326603). Embryos also show poor glycemic control (PubMed:25326603).</text>
</comment>
<comment type="similarity">
    <text evidence="8">Belongs to the major facilitator superfamily. Sugar transporter (TC 2.A.1.1) family. Glucose transporter subfamily.</text>
</comment>
<feature type="chain" id="PRO_0000292017" description="Solute carrier family 2, facilitated glucose transporter member 12">
    <location>
        <begin position="1"/>
        <end position="610"/>
    </location>
</feature>
<feature type="topological domain" description="Cytoplasmic" evidence="4">
    <location>
        <begin position="1"/>
        <end position="49"/>
    </location>
</feature>
<feature type="transmembrane region" description="Helical" evidence="4">
    <location>
        <begin position="50"/>
        <end position="70"/>
    </location>
</feature>
<feature type="topological domain" description="Extracellular" evidence="4">
    <location>
        <begin position="71"/>
        <end position="84"/>
    </location>
</feature>
<feature type="transmembrane region" description="Helical" evidence="4">
    <location>
        <begin position="85"/>
        <end position="105"/>
    </location>
</feature>
<feature type="topological domain" description="Cytoplasmic" evidence="4">
    <location>
        <begin position="106"/>
        <end position="118"/>
    </location>
</feature>
<feature type="transmembrane region" description="Helical" evidence="4">
    <location>
        <begin position="119"/>
        <end position="139"/>
    </location>
</feature>
<feature type="topological domain" description="Extracellular" evidence="4">
    <location>
        <begin position="140"/>
        <end position="141"/>
    </location>
</feature>
<feature type="transmembrane region" description="Helical" evidence="4">
    <location>
        <begin position="142"/>
        <end position="162"/>
    </location>
</feature>
<feature type="topological domain" description="Cytoplasmic" evidence="4">
    <location>
        <begin position="163"/>
        <end position="176"/>
    </location>
</feature>
<feature type="transmembrane region" description="Helical" evidence="4">
    <location>
        <begin position="177"/>
        <end position="197"/>
    </location>
</feature>
<feature type="topological domain" description="Extracellular" evidence="4">
    <location>
        <begin position="198"/>
        <end position="201"/>
    </location>
</feature>
<feature type="transmembrane region" description="Helical" evidence="4">
    <location>
        <begin position="202"/>
        <end position="222"/>
    </location>
</feature>
<feature type="topological domain" description="Cytoplasmic" evidence="4">
    <location>
        <begin position="223"/>
        <end position="286"/>
    </location>
</feature>
<feature type="transmembrane region" description="Helical" evidence="4">
    <location>
        <begin position="287"/>
        <end position="307"/>
    </location>
</feature>
<feature type="topological domain" description="Extracellular" evidence="4">
    <location>
        <begin position="308"/>
        <end position="325"/>
    </location>
</feature>
<feature type="transmembrane region" description="Helical" evidence="4">
    <location>
        <begin position="326"/>
        <end position="346"/>
    </location>
</feature>
<feature type="topological domain" description="Cytoplasmic" evidence="4">
    <location>
        <begin position="347"/>
        <end position="353"/>
    </location>
</feature>
<feature type="transmembrane region" description="Helical" evidence="4">
    <location>
        <begin position="354"/>
        <end position="374"/>
    </location>
</feature>
<feature type="topological domain" description="Extracellular" evidence="4">
    <location>
        <begin position="375"/>
        <end position="475"/>
    </location>
</feature>
<feature type="transmembrane region" description="Helical" evidence="4">
    <location>
        <begin position="476"/>
        <end position="496"/>
    </location>
</feature>
<feature type="topological domain" description="Cytoplasmic" evidence="4">
    <location>
        <begin position="497"/>
        <end position="511"/>
    </location>
</feature>
<feature type="transmembrane region" description="Helical" evidence="4">
    <location>
        <begin position="512"/>
        <end position="532"/>
    </location>
</feature>
<feature type="topological domain" description="Extracellular" evidence="4">
    <location>
        <begin position="533"/>
        <end position="542"/>
    </location>
</feature>
<feature type="transmembrane region" description="Helical" evidence="4">
    <location>
        <begin position="543"/>
        <end position="563"/>
    </location>
</feature>
<feature type="topological domain" description="Cytoplasmic" evidence="4">
    <location>
        <begin position="564"/>
        <end position="610"/>
    </location>
</feature>
<feature type="glycosylation site" description="N-linked (GlcNAc...) asparagine" evidence="4">
    <location>
        <position position="392"/>
    </location>
</feature>
<feature type="glycosylation site" description="N-linked (GlcNAc...) asparagine" evidence="4">
    <location>
        <position position="429"/>
    </location>
</feature>
<feature type="glycosylation site" description="N-linked (GlcNAc...) asparagine" evidence="4">
    <location>
        <position position="438"/>
    </location>
</feature>
<feature type="sequence conflict" description="In Ref. 1; AAH56306." evidence="8" ref="1">
    <original>G</original>
    <variation>S</variation>
    <location>
        <position position="32"/>
    </location>
</feature>
<feature type="sequence conflict" description="In Ref. 1; AAH56306." evidence="8" ref="1">
    <original>T</original>
    <variation>A</variation>
    <location>
        <position position="423"/>
    </location>
</feature>
<feature type="sequence conflict" description="In Ref. 1; AAH56306." evidence="8" ref="1">
    <original>N</original>
    <variation>D</variation>
    <location>
        <position position="442"/>
    </location>
</feature>
<feature type="sequence conflict" description="In Ref. 1; AAH56306." evidence="8" ref="1">
    <original>M</original>
    <variation>I</variation>
    <location>
        <position position="448"/>
    </location>
</feature>
<feature type="sequence conflict" description="In Ref. 1; AAH56306." evidence="8" ref="1">
    <original>T</original>
    <variation>I</variation>
    <location>
        <position position="597"/>
    </location>
</feature>
<sequence length="610" mass="65778">MDAPEESIRMTSDPQSKIYVQNPDTHIHLEQGPSAKSGNGRALVLCSVSVACLSGLLMGYEMSLISGALLQLRDVLTLSCPEQEQVVGSLLLGAFLLSLGGGTILDHYGRRFTIILTALLCVLGTLLSVCVVSFWALVVGRMLVGMSVALSGTASCLYAAEVAPAAWRGRCVCVYELMVVLGMLLGFGLSWAFAGVPDGWRFTFGGALLPALLQAGVMPLLPDSPRFLLAQQREKEAHATLLRLRAGIKEVEPVEDELRAIRLAMGAERLHGFLDLFQSRDNMLQRLLVGAALVFLQQATGQPNILAYASTVLSSVGFHGNEAATLASTGFGVVKVGGTIPAIFLVDKVGPKALLCVGVVVMMLSTATLGAITMQSRTHVSSLCRGPGNTANFTLFETGDETDIQTNTPLGLYQPQNKLKTNTFLTSINDTREHWILNHTYNHRTALMETAELSKKDSAKIALQSLHEVSPSLKWISLVSLLVYVAGFSISLGPMVHVVLSAIFPTGIRGKAVSVISAFNWATNLLISMTFLTLTERIGLPTVIFSYSAMSFLLVVFVIVFVPETKGRSLEQISKELAMKNHLRGTLLCHRRKHKATAQPSQEEKALATV</sequence>
<dbReference type="EMBL" id="BC056306">
    <property type="protein sequence ID" value="AAH56306.1"/>
    <property type="molecule type" value="mRNA"/>
</dbReference>
<dbReference type="EMBL" id="BC067616">
    <property type="protein sequence ID" value="AAH67616.2"/>
    <property type="molecule type" value="mRNA"/>
</dbReference>
<dbReference type="RefSeq" id="NP_956832.1">
    <property type="nucleotide sequence ID" value="NM_200538.1"/>
</dbReference>
<dbReference type="RefSeq" id="XP_005162361.1">
    <property type="nucleotide sequence ID" value="XM_005162304.3"/>
</dbReference>
<dbReference type="SMR" id="Q6NWF1"/>
<dbReference type="FunCoup" id="Q6NWF1">
    <property type="interactions" value="2"/>
</dbReference>
<dbReference type="STRING" id="7955.ENSDARP00000053530"/>
<dbReference type="GlyCosmos" id="Q6NWF1">
    <property type="glycosylation" value="3 sites, No reported glycans"/>
</dbReference>
<dbReference type="PaxDb" id="7955-ENSDARP00000053530"/>
<dbReference type="Ensembl" id="ENSDART00000053531">
    <property type="protein sequence ID" value="ENSDARP00000053530"/>
    <property type="gene ID" value="ENSDARG00000036865"/>
</dbReference>
<dbReference type="GeneID" id="393510"/>
<dbReference type="KEGG" id="dre:393510"/>
<dbReference type="AGR" id="ZFIN:ZDB-GENE-040426-1513"/>
<dbReference type="CTD" id="154091"/>
<dbReference type="ZFIN" id="ZDB-GENE-040426-1513">
    <property type="gene designation" value="slc2a12"/>
</dbReference>
<dbReference type="eggNOG" id="KOG0254">
    <property type="taxonomic scope" value="Eukaryota"/>
</dbReference>
<dbReference type="InParanoid" id="Q6NWF1"/>
<dbReference type="OMA" id="TGSHMES"/>
<dbReference type="OrthoDB" id="4142200at2759"/>
<dbReference type="PhylomeDB" id="Q6NWF1"/>
<dbReference type="TreeFam" id="TF332408"/>
<dbReference type="Reactome" id="R-DRE-189200">
    <property type="pathway name" value="Cellular hexose transport"/>
</dbReference>
<dbReference type="PRO" id="PR:Q6NWF1"/>
<dbReference type="Proteomes" id="UP000000437">
    <property type="component" value="Alternate scaffold 23"/>
</dbReference>
<dbReference type="Proteomes" id="UP000000437">
    <property type="component" value="Chromosome 23"/>
</dbReference>
<dbReference type="Bgee" id="ENSDARG00000036865">
    <property type="expression patterns" value="Expressed in bone element and 20 other cell types or tissues"/>
</dbReference>
<dbReference type="ExpressionAtlas" id="Q6NWF1">
    <property type="expression patterns" value="baseline"/>
</dbReference>
<dbReference type="GO" id="GO:0012505">
    <property type="term" value="C:endomembrane system"/>
    <property type="evidence" value="ECO:0007669"/>
    <property type="project" value="UniProtKB-SubCell"/>
</dbReference>
<dbReference type="GO" id="GO:0016020">
    <property type="term" value="C:membrane"/>
    <property type="evidence" value="ECO:0000318"/>
    <property type="project" value="GO_Central"/>
</dbReference>
<dbReference type="GO" id="GO:0048471">
    <property type="term" value="C:perinuclear region of cytoplasm"/>
    <property type="evidence" value="ECO:0007669"/>
    <property type="project" value="UniProtKB-SubCell"/>
</dbReference>
<dbReference type="GO" id="GO:0005886">
    <property type="term" value="C:plasma membrane"/>
    <property type="evidence" value="ECO:0007669"/>
    <property type="project" value="UniProtKB-SubCell"/>
</dbReference>
<dbReference type="GO" id="GO:0055056">
    <property type="term" value="F:D-glucose transmembrane transporter activity"/>
    <property type="evidence" value="ECO:0000318"/>
    <property type="project" value="GO_Central"/>
</dbReference>
<dbReference type="GO" id="GO:0072359">
    <property type="term" value="P:circulatory system development"/>
    <property type="evidence" value="ECO:0000318"/>
    <property type="project" value="GO_Central"/>
</dbReference>
<dbReference type="GO" id="GO:1904659">
    <property type="term" value="P:D-glucose transmembrane transport"/>
    <property type="evidence" value="ECO:0000318"/>
    <property type="project" value="GO_Central"/>
</dbReference>
<dbReference type="GO" id="GO:0044381">
    <property type="term" value="P:glucose import in response to insulin stimulus"/>
    <property type="evidence" value="ECO:0000315"/>
    <property type="project" value="ZFIN"/>
</dbReference>
<dbReference type="GO" id="GO:0060047">
    <property type="term" value="P:heart contraction"/>
    <property type="evidence" value="ECO:0000315"/>
    <property type="project" value="ZFIN"/>
</dbReference>
<dbReference type="GO" id="GO:0007507">
    <property type="term" value="P:heart development"/>
    <property type="evidence" value="ECO:0000315"/>
    <property type="project" value="ZFIN"/>
</dbReference>
<dbReference type="GO" id="GO:0003179">
    <property type="term" value="P:heart valve morphogenesis"/>
    <property type="evidence" value="ECO:0000315"/>
    <property type="project" value="ZFIN"/>
</dbReference>
<dbReference type="CDD" id="cd17435">
    <property type="entry name" value="MFS_GLUT12_Class3"/>
    <property type="match status" value="1"/>
</dbReference>
<dbReference type="Gene3D" id="1.20.1250.20">
    <property type="entry name" value="MFS general substrate transporter like domains"/>
    <property type="match status" value="2"/>
</dbReference>
<dbReference type="InterPro" id="IPR020846">
    <property type="entry name" value="MFS_dom"/>
</dbReference>
<dbReference type="InterPro" id="IPR005828">
    <property type="entry name" value="MFS_sugar_transport-like"/>
</dbReference>
<dbReference type="InterPro" id="IPR050820">
    <property type="entry name" value="MFS_Sugar_Transporter"/>
</dbReference>
<dbReference type="InterPro" id="IPR036259">
    <property type="entry name" value="MFS_trans_sf"/>
</dbReference>
<dbReference type="InterPro" id="IPR003663">
    <property type="entry name" value="Sugar/inositol_transpt"/>
</dbReference>
<dbReference type="InterPro" id="IPR005829">
    <property type="entry name" value="Sugar_transporter_CS"/>
</dbReference>
<dbReference type="PANTHER" id="PTHR48023">
    <property type="entry name" value="D-XYLOSE-PROTON SYMPORTER-LIKE 2"/>
    <property type="match status" value="1"/>
</dbReference>
<dbReference type="PANTHER" id="PTHR48023:SF2">
    <property type="entry name" value="SOLUTE CARRIER FAMILY 2, FACILITATED GLUCOSE TRANSPORTER MEMBER 12"/>
    <property type="match status" value="1"/>
</dbReference>
<dbReference type="Pfam" id="PF00083">
    <property type="entry name" value="Sugar_tr"/>
    <property type="match status" value="2"/>
</dbReference>
<dbReference type="PRINTS" id="PR00171">
    <property type="entry name" value="SUGRTRNSPORT"/>
</dbReference>
<dbReference type="SUPFAM" id="SSF103473">
    <property type="entry name" value="MFS general substrate transporter"/>
    <property type="match status" value="1"/>
</dbReference>
<dbReference type="PROSITE" id="PS50850">
    <property type="entry name" value="MFS"/>
    <property type="match status" value="1"/>
</dbReference>
<dbReference type="PROSITE" id="PS00216">
    <property type="entry name" value="SUGAR_TRANSPORT_1"/>
    <property type="match status" value="1"/>
</dbReference>
<keyword id="KW-1003">Cell membrane</keyword>
<keyword id="KW-0963">Cytoplasm</keyword>
<keyword id="KW-0325">Glycoprotein</keyword>
<keyword id="KW-0472">Membrane</keyword>
<keyword id="KW-1185">Reference proteome</keyword>
<keyword id="KW-0762">Sugar transport</keyword>
<keyword id="KW-0812">Transmembrane</keyword>
<keyword id="KW-1133">Transmembrane helix</keyword>
<keyword id="KW-0813">Transport</keyword>
<protein>
    <recommendedName>
        <fullName evidence="8">Solute carrier family 2, facilitated glucose transporter member 12</fullName>
    </recommendedName>
    <alternativeName>
        <fullName evidence="6">Glucose transporter type 12</fullName>
        <shortName evidence="6">GLUT-12</shortName>
    </alternativeName>
</protein>
<organism>
    <name type="scientific">Danio rerio</name>
    <name type="common">Zebrafish</name>
    <name type="synonym">Brachydanio rerio</name>
    <dbReference type="NCBI Taxonomy" id="7955"/>
    <lineage>
        <taxon>Eukaryota</taxon>
        <taxon>Metazoa</taxon>
        <taxon>Chordata</taxon>
        <taxon>Craniata</taxon>
        <taxon>Vertebrata</taxon>
        <taxon>Euteleostomi</taxon>
        <taxon>Actinopterygii</taxon>
        <taxon>Neopterygii</taxon>
        <taxon>Teleostei</taxon>
        <taxon>Ostariophysi</taxon>
        <taxon>Cypriniformes</taxon>
        <taxon>Danionidae</taxon>
        <taxon>Danioninae</taxon>
        <taxon>Danio</taxon>
    </lineage>
</organism>
<proteinExistence type="evidence at transcript level"/>
<accession>Q6NWF1</accession>
<accession>Q6PHV4</accession>
<evidence type="ECO:0000250" key="1">
    <source>
        <dbReference type="UniProtKB" id="Q5J316"/>
    </source>
</evidence>
<evidence type="ECO:0000250" key="2">
    <source>
        <dbReference type="UniProtKB" id="Q8BFW9"/>
    </source>
</evidence>
<evidence type="ECO:0000250" key="3">
    <source>
        <dbReference type="UniProtKB" id="Q8TD20"/>
    </source>
</evidence>
<evidence type="ECO:0000255" key="4"/>
<evidence type="ECO:0000269" key="5">
    <source>
    </source>
</evidence>
<evidence type="ECO:0000303" key="6">
    <source>
    </source>
</evidence>
<evidence type="ECO:0000303" key="7">
    <source ref="1"/>
</evidence>
<evidence type="ECO:0000305" key="8"/>
<evidence type="ECO:0000305" key="9">
    <source>
    </source>
</evidence>
<gene>
    <name evidence="3" type="primary">slc2a12</name>
    <name evidence="6" type="synonym">glut12</name>
    <name evidence="7" type="ORF">zgc:66027</name>
    <name evidence="7" type="ORF">zgc:85776</name>
</gene>
<reference key="1">
    <citation type="submission" date="2004-03" db="EMBL/GenBank/DDBJ databases">
        <authorList>
            <consortium name="NIH - Zebrafish Gene Collection (ZGC) project"/>
        </authorList>
    </citation>
    <scope>NUCLEOTIDE SEQUENCE [LARGE SCALE MRNA]</scope>
    <source>
        <tissue>Kidney</tissue>
    </source>
</reference>
<reference key="2">
    <citation type="journal article" date="2015" name="J. Endocrinol.">
        <title>GLUT12 deficiency during early development results in heart failure and a diabetic phenotype in zebrafish.</title>
        <authorList>
            <person name="Jimenez-Amilburu V."/>
            <person name="Jong-Raadsen S."/>
            <person name="Bakkers J."/>
            <person name="Spaink H.P."/>
            <person name="Marin-Juez R."/>
        </authorList>
    </citation>
    <scope>FUNCTION</scope>
    <scope>TISSUE SPECIFICITY</scope>
    <scope>DISRUPTION PHENOTYPE</scope>
</reference>